<accession>P0C973</accession>
<dbReference type="EC" id="2.7.7.7" evidence="2"/>
<dbReference type="EMBL" id="AY261366">
    <property type="status" value="NOT_ANNOTATED_CDS"/>
    <property type="molecule type" value="Genomic_DNA"/>
</dbReference>
<dbReference type="SMR" id="P0C973"/>
<dbReference type="Proteomes" id="UP000000858">
    <property type="component" value="Segment"/>
</dbReference>
<dbReference type="GO" id="GO:0003677">
    <property type="term" value="F:DNA binding"/>
    <property type="evidence" value="ECO:0007669"/>
    <property type="project" value="UniProtKB-KW"/>
</dbReference>
<dbReference type="GO" id="GO:0003887">
    <property type="term" value="F:DNA-directed DNA polymerase activity"/>
    <property type="evidence" value="ECO:0007669"/>
    <property type="project" value="UniProtKB-KW"/>
</dbReference>
<dbReference type="GO" id="GO:0000166">
    <property type="term" value="F:nucleotide binding"/>
    <property type="evidence" value="ECO:0007669"/>
    <property type="project" value="InterPro"/>
</dbReference>
<dbReference type="GO" id="GO:0006260">
    <property type="term" value="P:DNA replication"/>
    <property type="evidence" value="ECO:0007669"/>
    <property type="project" value="UniProtKB-KW"/>
</dbReference>
<dbReference type="GO" id="GO:0039693">
    <property type="term" value="P:viral DNA genome replication"/>
    <property type="evidence" value="ECO:0007669"/>
    <property type="project" value="UniProtKB-KW"/>
</dbReference>
<dbReference type="Gene3D" id="1.10.132.60">
    <property type="entry name" value="DNA polymerase family B, C-terminal domain"/>
    <property type="match status" value="1"/>
</dbReference>
<dbReference type="Gene3D" id="1.10.287.690">
    <property type="entry name" value="Helix hairpin bin"/>
    <property type="match status" value="1"/>
</dbReference>
<dbReference type="Gene3D" id="3.90.1600.10">
    <property type="entry name" value="Palm domain of DNA polymerase"/>
    <property type="match status" value="1"/>
</dbReference>
<dbReference type="Gene3D" id="3.30.420.10">
    <property type="entry name" value="Ribonuclease H-like superfamily/Ribonuclease H"/>
    <property type="match status" value="1"/>
</dbReference>
<dbReference type="InterPro" id="IPR006172">
    <property type="entry name" value="DNA-dir_DNA_pol_B"/>
</dbReference>
<dbReference type="InterPro" id="IPR017964">
    <property type="entry name" value="DNA-dir_DNA_pol_B_CS"/>
</dbReference>
<dbReference type="InterPro" id="IPR006133">
    <property type="entry name" value="DNA-dir_DNA_pol_B_exonuc"/>
</dbReference>
<dbReference type="InterPro" id="IPR006134">
    <property type="entry name" value="DNA-dir_DNA_pol_B_multi_dom"/>
</dbReference>
<dbReference type="InterPro" id="IPR043502">
    <property type="entry name" value="DNA/RNA_pol_sf"/>
</dbReference>
<dbReference type="InterPro" id="IPR042087">
    <property type="entry name" value="DNA_pol_B_thumb"/>
</dbReference>
<dbReference type="InterPro" id="IPR023211">
    <property type="entry name" value="DNA_pol_palm_dom_sf"/>
</dbReference>
<dbReference type="InterPro" id="IPR050240">
    <property type="entry name" value="DNA_pol_type-B"/>
</dbReference>
<dbReference type="InterPro" id="IPR012337">
    <property type="entry name" value="RNaseH-like_sf"/>
</dbReference>
<dbReference type="InterPro" id="IPR036397">
    <property type="entry name" value="RNaseH_sf"/>
</dbReference>
<dbReference type="PANTHER" id="PTHR10322">
    <property type="entry name" value="DNA POLYMERASE CATALYTIC SUBUNIT"/>
    <property type="match status" value="1"/>
</dbReference>
<dbReference type="PANTHER" id="PTHR10322:SF23">
    <property type="entry name" value="DNA POLYMERASE DELTA CATALYTIC SUBUNIT"/>
    <property type="match status" value="1"/>
</dbReference>
<dbReference type="Pfam" id="PF00136">
    <property type="entry name" value="DNA_pol_B"/>
    <property type="match status" value="2"/>
</dbReference>
<dbReference type="Pfam" id="PF03104">
    <property type="entry name" value="DNA_pol_B_exo1"/>
    <property type="match status" value="1"/>
</dbReference>
<dbReference type="PRINTS" id="PR00106">
    <property type="entry name" value="DNAPOLB"/>
</dbReference>
<dbReference type="SMART" id="SM00486">
    <property type="entry name" value="POLBc"/>
    <property type="match status" value="1"/>
</dbReference>
<dbReference type="SUPFAM" id="SSF56672">
    <property type="entry name" value="DNA/RNA polymerases"/>
    <property type="match status" value="1"/>
</dbReference>
<dbReference type="SUPFAM" id="SSF53098">
    <property type="entry name" value="Ribonuclease H-like"/>
    <property type="match status" value="1"/>
</dbReference>
<dbReference type="PROSITE" id="PS00116">
    <property type="entry name" value="DNA_POLYMERASE_B"/>
    <property type="match status" value="1"/>
</dbReference>
<comment type="function">
    <text evidence="1">DNA-directed DNA polymerase involved in viral DNA replication.</text>
</comment>
<comment type="catalytic activity">
    <reaction>
        <text>DNA(n) + a 2'-deoxyribonucleoside 5'-triphosphate = DNA(n+1) + diphosphate</text>
        <dbReference type="Rhea" id="RHEA:22508"/>
        <dbReference type="Rhea" id="RHEA-COMP:17339"/>
        <dbReference type="Rhea" id="RHEA-COMP:17340"/>
        <dbReference type="ChEBI" id="CHEBI:33019"/>
        <dbReference type="ChEBI" id="CHEBI:61560"/>
        <dbReference type="ChEBI" id="CHEBI:173112"/>
        <dbReference type="EC" id="2.7.7.7"/>
    </reaction>
</comment>
<comment type="induction">
    <text evidence="3">Expressed in the early phase of the viral replicative cycle.</text>
</comment>
<comment type="miscellaneous">
    <text>Consistent with its intracellular location, ASFV encodes its own replicative DNA polymerase and three base excision repair enzymes: a class II AP endonuclease, the repair polymerase Pol X, and an ATP-dependent DNA ligase.</text>
</comment>
<comment type="similarity">
    <text evidence="3">Belongs to the DNA polymerase type-B family.</text>
</comment>
<name>DPOL_ASFWA</name>
<sequence length="1199" mass="138641">MDRSEIVARENPVITQRVTNLLQTNAPLLFMPIDIHEVRYGAYTLFMYGSLENGYKAEVRIENIPVFFDVQIESSNTNQLFLKSLLTAENITYERLETLTQRPVMGYREKEKEFAPYIRIFFKSLYERRKAITYLNNMGYNTAADDTTCYYRMVSRELKLPLTSWIQLQHYSYEPHGLVHRFSVTPEDLVSYQDDGPTDHSIVMAYDIETYSPVKGTVPDPNQANDVVFMICMRIFWIHSTEPLASTCITMAPCKKSSEWTTILCSSEKNLLLSFAEQFSRWAPDICTGFNDSRYDWPFIVEKSMQHGILEEIFNKMSLFWHQKLDTILKCYYVKEKRVKISAEKSIISSFLHTPGCLPIDVRNMCMQLYPKAEKTSLKAFLENCGLDSKVDLPYHLMWKYYETRDSEKMADVAYYCIIDAQRCQDLLVRHNVIPDRREVGILSYTSLYDCIYYAGGHKVCNMLIAYAIHDEYGRIACSTIARGKREHGKYPGAFVIDPVKGLEQDKPTTGLDFASLYPSLIMAYNFSPEKFVASREEANSLMAKGESLHYVSFHFNNRLVEGWFVRHNNVPDKMGLYPKVLIDLLNKRTALKQELKKLGEKKECIHESHPGFKELQFRHAMVDAKQKALKIFMNTFYGEAGNNLSPFFLLPLAGGVTSSGQYNLKLVYNFVINKGYGIKYGDTDSLYITCPDSLYTEVTDAYLNSQKTIKHYEQLCHEKVLLSMKAMSTLCAEVNEYLRRDNGTSYLRMAYEEVLFPVCFTGKKKYYGIAHVNTPNFNTKELFIRGIDIIKQGQTKLTKTIGTRIMEESMKLRRPEDHRPPLIEIVKTVLKDAVVNMKQWNFEDFIQTDAWRPDKDNKAVQIFMSRMHARREQLKKHGAAASQFAEPEPGERFSYVIVEKQVQFDIQGHRTDSSRKGDKMEYVSEAKAKNLPIDILFYINNYVLGLCARFINENEEFQPPDNVSNKDEYAQRRAKSYLQKFVQSIHPKDKSVIKQGIVHRQCYKYVHQEIKKKIGIFADLYKEFFNNTTNPIESFIQSTQFMIQYFDGEQKVNHSMKKMVEQHATSAGNSAGNPAGNALMRAIFTQLITEEKKIVQALYNKGDAIHDLLTYIINNINYKIATFQTKQMLTFEFSSTHVELLLKLNKTWLILAGIHVAKKHLQALLDSYNNEPPSRTFIQQAIEEECGSIKPSCYDFIS</sequence>
<organismHost>
    <name type="scientific">Ornithodoros</name>
    <name type="common">relapsing fever ticks</name>
    <dbReference type="NCBI Taxonomy" id="6937"/>
</organismHost>
<organismHost>
    <name type="scientific">Phacochoerus aethiopicus</name>
    <name type="common">Warthog</name>
    <dbReference type="NCBI Taxonomy" id="85517"/>
</organismHost>
<organismHost>
    <name type="scientific">Phacochoerus africanus</name>
    <name type="common">Warthog</name>
    <dbReference type="NCBI Taxonomy" id="41426"/>
</organismHost>
<organismHost>
    <name type="scientific">Potamochoerus larvatus</name>
    <name type="common">Bushpig</name>
    <dbReference type="NCBI Taxonomy" id="273792"/>
</organismHost>
<organismHost>
    <name type="scientific">Sus scrofa</name>
    <name type="common">Pig</name>
    <dbReference type="NCBI Taxonomy" id="9823"/>
</organismHost>
<keyword id="KW-0235">DNA replication</keyword>
<keyword id="KW-0238">DNA-binding</keyword>
<keyword id="KW-0239">DNA-directed DNA polymerase</keyword>
<keyword id="KW-0244">Early protein</keyword>
<keyword id="KW-0548">Nucleotidyltransferase</keyword>
<keyword id="KW-0808">Transferase</keyword>
<keyword id="KW-1194">Viral DNA replication</keyword>
<organism>
    <name type="scientific">African swine fever virus (isolate Warthog/Namibia/Wart80/1980)</name>
    <name type="common">ASFV</name>
    <dbReference type="NCBI Taxonomy" id="561444"/>
    <lineage>
        <taxon>Viruses</taxon>
        <taxon>Varidnaviria</taxon>
        <taxon>Bamfordvirae</taxon>
        <taxon>Nucleocytoviricota</taxon>
        <taxon>Pokkesviricetes</taxon>
        <taxon>Asfuvirales</taxon>
        <taxon>Asfarviridae</taxon>
        <taxon>Asfivirus</taxon>
        <taxon>African swine fever virus</taxon>
    </lineage>
</organism>
<reference key="1">
    <citation type="submission" date="2003-03" db="EMBL/GenBank/DDBJ databases">
        <title>African swine fever virus genomes.</title>
        <authorList>
            <person name="Kutish G.F."/>
            <person name="Rock D.L."/>
        </authorList>
    </citation>
    <scope>NUCLEOTIDE SEQUENCE [LARGE SCALE GENOMIC DNA]</scope>
</reference>
<gene>
    <name type="ordered locus">War-100</name>
</gene>
<protein>
    <recommendedName>
        <fullName>DNA polymerase beta</fullName>
        <ecNumber evidence="2">2.7.7.7</ecNumber>
    </recommendedName>
</protein>
<proteinExistence type="inferred from homology"/>
<evidence type="ECO:0000250" key="1"/>
<evidence type="ECO:0000250" key="2">
    <source>
        <dbReference type="UniProtKB" id="P42489"/>
    </source>
</evidence>
<evidence type="ECO:0000305" key="3"/>
<feature type="chain" id="PRO_0000373072" description="DNA polymerase beta">
    <location>
        <begin position="1"/>
        <end position="1199"/>
    </location>
</feature>